<keyword id="KW-0051">Antiviral defense</keyword>
<keyword id="KW-0255">Endonuclease</keyword>
<keyword id="KW-0378">Hydrolase</keyword>
<keyword id="KW-0460">Magnesium</keyword>
<keyword id="KW-0479">Metal-binding</keyword>
<keyword id="KW-0540">Nuclease</keyword>
<keyword id="KW-1185">Reference proteome</keyword>
<proteinExistence type="inferred from homology"/>
<dbReference type="EC" id="3.1.-.-" evidence="1"/>
<dbReference type="EMBL" id="CP000860">
    <property type="protein sequence ID" value="ACA59799.1"/>
    <property type="molecule type" value="Genomic_DNA"/>
</dbReference>
<dbReference type="RefSeq" id="WP_012302384.1">
    <property type="nucleotide sequence ID" value="NC_010424.1"/>
</dbReference>
<dbReference type="SMR" id="B1I4M2"/>
<dbReference type="STRING" id="477974.Daud_1288"/>
<dbReference type="KEGG" id="dau:Daud_1288"/>
<dbReference type="eggNOG" id="COG1343">
    <property type="taxonomic scope" value="Bacteria"/>
</dbReference>
<dbReference type="HOGENOM" id="CLU_161124_2_1_9"/>
<dbReference type="OrthoDB" id="9798176at2"/>
<dbReference type="Proteomes" id="UP000008544">
    <property type="component" value="Chromosome"/>
</dbReference>
<dbReference type="GO" id="GO:0046872">
    <property type="term" value="F:metal ion binding"/>
    <property type="evidence" value="ECO:0007669"/>
    <property type="project" value="UniProtKB-UniRule"/>
</dbReference>
<dbReference type="GO" id="GO:0004521">
    <property type="term" value="F:RNA endonuclease activity"/>
    <property type="evidence" value="ECO:0007669"/>
    <property type="project" value="InterPro"/>
</dbReference>
<dbReference type="GO" id="GO:0051607">
    <property type="term" value="P:defense response to virus"/>
    <property type="evidence" value="ECO:0007669"/>
    <property type="project" value="UniProtKB-UniRule"/>
</dbReference>
<dbReference type="GO" id="GO:0043571">
    <property type="term" value="P:maintenance of CRISPR repeat elements"/>
    <property type="evidence" value="ECO:0007669"/>
    <property type="project" value="UniProtKB-UniRule"/>
</dbReference>
<dbReference type="CDD" id="cd09725">
    <property type="entry name" value="Cas2_I_II_III"/>
    <property type="match status" value="1"/>
</dbReference>
<dbReference type="Gene3D" id="3.30.70.240">
    <property type="match status" value="1"/>
</dbReference>
<dbReference type="HAMAP" id="MF_01471">
    <property type="entry name" value="Cas2"/>
    <property type="match status" value="1"/>
</dbReference>
<dbReference type="InterPro" id="IPR021127">
    <property type="entry name" value="CRISPR_associated_Cas2"/>
</dbReference>
<dbReference type="InterPro" id="IPR019199">
    <property type="entry name" value="Virulence_VapD/CRISPR_Cas2"/>
</dbReference>
<dbReference type="NCBIfam" id="TIGR01573">
    <property type="entry name" value="cas2"/>
    <property type="match status" value="1"/>
</dbReference>
<dbReference type="PANTHER" id="PTHR34405">
    <property type="entry name" value="CRISPR-ASSOCIATED ENDORIBONUCLEASE CAS2"/>
    <property type="match status" value="1"/>
</dbReference>
<dbReference type="PANTHER" id="PTHR34405:SF3">
    <property type="entry name" value="CRISPR-ASSOCIATED ENDORIBONUCLEASE CAS2 3"/>
    <property type="match status" value="1"/>
</dbReference>
<dbReference type="Pfam" id="PF09827">
    <property type="entry name" value="CRISPR_Cas2"/>
    <property type="match status" value="1"/>
</dbReference>
<dbReference type="SUPFAM" id="SSF143430">
    <property type="entry name" value="TTP0101/SSO1404-like"/>
    <property type="match status" value="1"/>
</dbReference>
<protein>
    <recommendedName>
        <fullName evidence="1">CRISPR-associated endoribonuclease Cas2</fullName>
        <ecNumber evidence="1">3.1.-.-</ecNumber>
    </recommendedName>
</protein>
<feature type="chain" id="PRO_0000417709" description="CRISPR-associated endoribonuclease Cas2">
    <location>
        <begin position="1"/>
        <end position="106"/>
    </location>
</feature>
<feature type="region of interest" description="Disordered" evidence="2">
    <location>
        <begin position="86"/>
        <end position="106"/>
    </location>
</feature>
<feature type="binding site" evidence="1">
    <location>
        <position position="8"/>
    </location>
    <ligand>
        <name>Mg(2+)</name>
        <dbReference type="ChEBI" id="CHEBI:18420"/>
        <note>catalytic</note>
    </ligand>
</feature>
<sequence>MKTLVSYDIVEDKVRRKVFEACKDYGLTNVQYSLFFGDMTHNRREELFQRLRRIIGRQEGKVLICPVCDKDLRLSKAIEVSAGMPEEAAEAAVSYPGRSRKKARAG</sequence>
<reference key="1">
    <citation type="submission" date="2007-10" db="EMBL/GenBank/DDBJ databases">
        <title>Complete sequence of chromosome of Desulforudis audaxviator MP104C.</title>
        <authorList>
            <person name="Copeland A."/>
            <person name="Lucas S."/>
            <person name="Lapidus A."/>
            <person name="Barry K."/>
            <person name="Glavina del Rio T."/>
            <person name="Dalin E."/>
            <person name="Tice H."/>
            <person name="Bruce D."/>
            <person name="Pitluck S."/>
            <person name="Lowry S.R."/>
            <person name="Larimer F."/>
            <person name="Land M.L."/>
            <person name="Hauser L."/>
            <person name="Kyrpides N."/>
            <person name="Ivanova N.N."/>
            <person name="Richardson P."/>
        </authorList>
    </citation>
    <scope>NUCLEOTIDE SEQUENCE [LARGE SCALE GENOMIC DNA]</scope>
    <source>
        <strain>MP104C</strain>
    </source>
</reference>
<name>CAS2_DESAP</name>
<evidence type="ECO:0000255" key="1">
    <source>
        <dbReference type="HAMAP-Rule" id="MF_01471"/>
    </source>
</evidence>
<evidence type="ECO:0000256" key="2">
    <source>
        <dbReference type="SAM" id="MobiDB-lite"/>
    </source>
</evidence>
<gene>
    <name evidence="1" type="primary">cas2</name>
    <name type="ordered locus">Daud_1288</name>
</gene>
<comment type="function">
    <text evidence="1">CRISPR (clustered regularly interspaced short palindromic repeat), is an adaptive immune system that provides protection against mobile genetic elements (viruses, transposable elements and conjugative plasmids). CRISPR clusters contain sequences complementary to antecedent mobile elements and target invading nucleic acids. CRISPR clusters are transcribed and processed into CRISPR RNA (crRNA). Functions as a ssRNA-specific endoribonuclease. Involved in the integration of spacer DNA into the CRISPR cassette.</text>
</comment>
<comment type="cofactor">
    <cofactor evidence="1">
        <name>Mg(2+)</name>
        <dbReference type="ChEBI" id="CHEBI:18420"/>
    </cofactor>
</comment>
<comment type="subunit">
    <text evidence="1">Homodimer, forms a heterotetramer with a Cas1 homodimer.</text>
</comment>
<comment type="similarity">
    <text evidence="1">Belongs to the CRISPR-associated endoribonuclease Cas2 protein family.</text>
</comment>
<accession>B1I4M2</accession>
<organism>
    <name type="scientific">Desulforudis audaxviator (strain MP104C)</name>
    <dbReference type="NCBI Taxonomy" id="477974"/>
    <lineage>
        <taxon>Bacteria</taxon>
        <taxon>Bacillati</taxon>
        <taxon>Bacillota</taxon>
        <taxon>Clostridia</taxon>
        <taxon>Thermoanaerobacterales</taxon>
        <taxon>Candidatus Desulforudaceae</taxon>
        <taxon>Candidatus Desulforudis</taxon>
    </lineage>
</organism>